<dbReference type="EMBL" id="L22579">
    <property type="protein sequence ID" value="AAA60756.1"/>
    <property type="molecule type" value="Genomic_DNA"/>
</dbReference>
<dbReference type="EMBL" id="U18340">
    <property type="protein sequence ID" value="AAA69419.1"/>
    <property type="molecule type" value="Genomic_DNA"/>
</dbReference>
<dbReference type="EMBL" id="U18337">
    <property type="protein sequence ID" value="AAA69313.1"/>
    <property type="molecule type" value="Genomic_DNA"/>
</dbReference>
<dbReference type="EMBL" id="U18338">
    <property type="protein sequence ID" value="AAA69354.1"/>
    <property type="molecule type" value="Genomic_DNA"/>
</dbReference>
<dbReference type="PIR" id="F72151">
    <property type="entry name" value="F72151"/>
</dbReference>
<dbReference type="PIR" id="T28446">
    <property type="entry name" value="T28446"/>
</dbReference>
<dbReference type="RefSeq" id="NP_042052.1">
    <property type="nucleotide sequence ID" value="NC_001611.1"/>
</dbReference>
<dbReference type="SMR" id="P0DSW8"/>
<dbReference type="GeneID" id="1486403"/>
<dbReference type="KEGG" id="vg:1486403"/>
<dbReference type="Proteomes" id="UP000119805">
    <property type="component" value="Segment"/>
</dbReference>
<dbReference type="GO" id="GO:0052170">
    <property type="term" value="P:symbiont-mediated suppression of host innate immune response"/>
    <property type="evidence" value="ECO:0007669"/>
    <property type="project" value="UniProtKB-KW"/>
</dbReference>
<dbReference type="GO" id="GO:0016032">
    <property type="term" value="P:viral process"/>
    <property type="evidence" value="ECO:0007669"/>
    <property type="project" value="InterPro"/>
</dbReference>
<dbReference type="InterPro" id="IPR004967">
    <property type="entry name" value="Poxvirus_C7/F8A"/>
</dbReference>
<dbReference type="Pfam" id="PF03287">
    <property type="entry name" value="Pox_C7_F8A"/>
    <property type="match status" value="1"/>
</dbReference>
<dbReference type="PIRSF" id="PIRSF003779">
    <property type="entry name" value="VAC_C7L"/>
    <property type="match status" value="1"/>
</dbReference>
<feature type="chain" id="PRO_0000448175" description="Interferon antagonist OPG027">
    <location>
        <begin position="1"/>
        <end position="150"/>
    </location>
</feature>
<keyword id="KW-0244">Early protein</keyword>
<keyword id="KW-0945">Host-virus interaction</keyword>
<keyword id="KW-1090">Inhibition of host innate immune response by virus</keyword>
<keyword id="KW-0899">Viral immunoevasion</keyword>
<sequence>MGIQHEFDIIINGDIALRNLQLHRGDNYGCKLKIISNDYKKLKFRFIIRPDWSEIDEVKGLTVFANNYAVKVNKVDDTFYYVIYEAVIHLYNKKTEILIYSDDENELFKHYYPYISLNMISKKYKVKEENYSSPYIEHPLIPYRDYESMD</sequence>
<gene>
    <name type="primary">OPG027</name>
    <name type="synonym">D8L</name>
</gene>
<reference key="1">
    <citation type="journal article" date="1993" name="Nature">
        <title>Potential virulence determinants in terminal regions of variola smallpox virus genome.</title>
        <authorList>
            <person name="Massung R.F."/>
            <person name="Esposito J.J."/>
            <person name="Liu L.I."/>
            <person name="Qi J."/>
            <person name="Utterback T.R."/>
            <person name="Knight J.C."/>
            <person name="Aubin L."/>
            <person name="Yuran T.E."/>
            <person name="Parsons J.M."/>
            <person name="Loparev V.N."/>
            <person name="Selivanov N.A."/>
            <person name="Cavallaro K.F."/>
            <person name="Kerlavage A.R."/>
            <person name="Mahy B.W.J."/>
            <person name="Venter J.C."/>
        </authorList>
    </citation>
    <scope>NUCLEOTIDE SEQUENCE [GENOMIC DNA]</scope>
    <source>
        <strain>Bangladesh-1975</strain>
    </source>
</reference>
<reference key="2">
    <citation type="submission" date="1994-12" db="EMBL/GenBank/DDBJ databases">
        <authorList>
            <person name="Massung R.F."/>
            <person name="Loparev V.N."/>
            <person name="Knight J.C."/>
            <person name="Chizhikov V.E."/>
            <person name="Parsons J.M."/>
            <person name="Totmenin A.V."/>
            <person name="Shchelkunov S.N."/>
            <person name="Esposito J.J."/>
        </authorList>
    </citation>
    <scope>NUCLEOTIDE SEQUENCE [GENOMIC DNA]</scope>
    <source>
        <strain>Congo-1965</strain>
        <strain>Garcia-1966</strain>
        <strain>Somalia-1977</strain>
    </source>
</reference>
<comment type="function">
    <text evidence="1">Inhibits antiviral activity induced by type I interferons. Does not block signal transduction of IFN, but is important to counteract the host antiviral state induced by a pre-treatment with IFN (By similarity).</text>
</comment>
<comment type="induction">
    <text evidence="2">Expressed in the early phase of the viral replicative cycle.</text>
</comment>
<comment type="similarity">
    <text evidence="3">Belongs to the orthopoxvirus OPG027 family.</text>
</comment>
<organismHost>
    <name type="scientific">Homo sapiens</name>
    <name type="common">Human</name>
    <dbReference type="NCBI Taxonomy" id="9606"/>
</organismHost>
<accession>P0DSW8</accession>
<accession>P33860</accession>
<proteinExistence type="inferred from homology"/>
<evidence type="ECO:0000250" key="1"/>
<evidence type="ECO:0000250" key="2">
    <source>
        <dbReference type="UniProtKB" id="P68600"/>
    </source>
</evidence>
<evidence type="ECO:0000305" key="3"/>
<name>PG027_VARV</name>
<protein>
    <recommendedName>
        <fullName>Interferon antagonist OPG027</fullName>
    </recommendedName>
    <alternativeName>
        <fullName>Host range protein 2</fullName>
    </alternativeName>
</protein>
<organism>
    <name type="scientific">Variola virus</name>
    <dbReference type="NCBI Taxonomy" id="10255"/>
    <lineage>
        <taxon>Viruses</taxon>
        <taxon>Varidnaviria</taxon>
        <taxon>Bamfordvirae</taxon>
        <taxon>Nucleocytoviricota</taxon>
        <taxon>Pokkesviricetes</taxon>
        <taxon>Chitovirales</taxon>
        <taxon>Poxviridae</taxon>
        <taxon>Chordopoxvirinae</taxon>
        <taxon>Orthopoxvirus</taxon>
    </lineage>
</organism>